<evidence type="ECO:0000255" key="1">
    <source>
        <dbReference type="HAMAP-Rule" id="MF_00193"/>
    </source>
</evidence>
<sequence>MSRPDQAARRRAIAAELHVSPTFDARDEAERRIGFVADYLRTAGLRACVLGISGGIDSSTAGRLAQLAVERLRASGYDARFVAMRLPYGAQHDEADARRALAFVRADETLTVDVKPAADAMLAALAAGGLAYLDHAQQDFVLGNIKARERMIAQYAVAGARNGVVIGTDHAAESVMGFFTKFGDGGADVLPLAGLTKRRVRALARMLGADEPLVLKTPTADLETLRPQRPDEHAYGITYEQIDDFLEGKPMDDAVAETVLRFYDATHHKRALPYTMFDWPGHPA</sequence>
<reference key="1">
    <citation type="journal article" date="2010" name="Genome Biol. Evol.">
        <title>Continuing evolution of Burkholderia mallei through genome reduction and large-scale rearrangements.</title>
        <authorList>
            <person name="Losada L."/>
            <person name="Ronning C.M."/>
            <person name="DeShazer D."/>
            <person name="Woods D."/>
            <person name="Fedorova N."/>
            <person name="Kim H.S."/>
            <person name="Shabalina S.A."/>
            <person name="Pearson T.R."/>
            <person name="Brinkac L."/>
            <person name="Tan P."/>
            <person name="Nandi T."/>
            <person name="Crabtree J."/>
            <person name="Badger J."/>
            <person name="Beckstrom-Sternberg S."/>
            <person name="Saqib M."/>
            <person name="Schutzer S.E."/>
            <person name="Keim P."/>
            <person name="Nierman W.C."/>
        </authorList>
    </citation>
    <scope>NUCLEOTIDE SEQUENCE [LARGE SCALE GENOMIC DNA]</scope>
    <source>
        <strain>NCTC 10229</strain>
    </source>
</reference>
<keyword id="KW-0067">ATP-binding</keyword>
<keyword id="KW-0436">Ligase</keyword>
<keyword id="KW-0460">Magnesium</keyword>
<keyword id="KW-0479">Metal-binding</keyword>
<keyword id="KW-0520">NAD</keyword>
<keyword id="KW-0547">Nucleotide-binding</keyword>
<name>NADE_BURM9</name>
<protein>
    <recommendedName>
        <fullName evidence="1">NH(3)-dependent NAD(+) synthetase</fullName>
        <ecNumber evidence="1">6.3.1.5</ecNumber>
    </recommendedName>
</protein>
<feature type="chain" id="PRO_1000099007" description="NH(3)-dependent NAD(+) synthetase">
    <location>
        <begin position="1"/>
        <end position="284"/>
    </location>
</feature>
<feature type="binding site" evidence="1">
    <location>
        <begin position="51"/>
        <end position="58"/>
    </location>
    <ligand>
        <name>ATP</name>
        <dbReference type="ChEBI" id="CHEBI:30616"/>
    </ligand>
</feature>
<feature type="binding site" evidence="1">
    <location>
        <position position="57"/>
    </location>
    <ligand>
        <name>Mg(2+)</name>
        <dbReference type="ChEBI" id="CHEBI:18420"/>
    </ligand>
</feature>
<feature type="binding site" evidence="1">
    <location>
        <position position="148"/>
    </location>
    <ligand>
        <name>deamido-NAD(+)</name>
        <dbReference type="ChEBI" id="CHEBI:58437"/>
    </ligand>
</feature>
<feature type="binding site" evidence="1">
    <location>
        <position position="168"/>
    </location>
    <ligand>
        <name>ATP</name>
        <dbReference type="ChEBI" id="CHEBI:30616"/>
    </ligand>
</feature>
<feature type="binding site" evidence="1">
    <location>
        <position position="173"/>
    </location>
    <ligand>
        <name>Mg(2+)</name>
        <dbReference type="ChEBI" id="CHEBI:18420"/>
    </ligand>
</feature>
<feature type="binding site" evidence="1">
    <location>
        <position position="181"/>
    </location>
    <ligand>
        <name>deamido-NAD(+)</name>
        <dbReference type="ChEBI" id="CHEBI:58437"/>
    </ligand>
</feature>
<feature type="binding site" evidence="1">
    <location>
        <position position="188"/>
    </location>
    <ligand>
        <name>deamido-NAD(+)</name>
        <dbReference type="ChEBI" id="CHEBI:58437"/>
    </ligand>
</feature>
<feature type="binding site" evidence="1">
    <location>
        <position position="197"/>
    </location>
    <ligand>
        <name>ATP</name>
        <dbReference type="ChEBI" id="CHEBI:30616"/>
    </ligand>
</feature>
<feature type="binding site" evidence="1">
    <location>
        <position position="219"/>
    </location>
    <ligand>
        <name>ATP</name>
        <dbReference type="ChEBI" id="CHEBI:30616"/>
    </ligand>
</feature>
<feature type="binding site" evidence="1">
    <location>
        <begin position="268"/>
        <end position="269"/>
    </location>
    <ligand>
        <name>deamido-NAD(+)</name>
        <dbReference type="ChEBI" id="CHEBI:58437"/>
    </ligand>
</feature>
<proteinExistence type="inferred from homology"/>
<gene>
    <name evidence="1" type="primary">nadE</name>
    <name type="ordered locus">BMA10229_0698</name>
</gene>
<accession>A2RXU4</accession>
<organism>
    <name type="scientific">Burkholderia mallei (strain NCTC 10229)</name>
    <dbReference type="NCBI Taxonomy" id="412022"/>
    <lineage>
        <taxon>Bacteria</taxon>
        <taxon>Pseudomonadati</taxon>
        <taxon>Pseudomonadota</taxon>
        <taxon>Betaproteobacteria</taxon>
        <taxon>Burkholderiales</taxon>
        <taxon>Burkholderiaceae</taxon>
        <taxon>Burkholderia</taxon>
        <taxon>pseudomallei group</taxon>
    </lineage>
</organism>
<dbReference type="EC" id="6.3.1.5" evidence="1"/>
<dbReference type="EMBL" id="CP000545">
    <property type="protein sequence ID" value="ABM99595.1"/>
    <property type="molecule type" value="Genomic_DNA"/>
</dbReference>
<dbReference type="RefSeq" id="WP_004201926.1">
    <property type="nucleotide sequence ID" value="NC_008835.1"/>
</dbReference>
<dbReference type="SMR" id="A2RXU4"/>
<dbReference type="GeneID" id="92976563"/>
<dbReference type="KEGG" id="bml:BMA10229_0698"/>
<dbReference type="HOGENOM" id="CLU_059327_3_0_4"/>
<dbReference type="UniPathway" id="UPA00253">
    <property type="reaction ID" value="UER00333"/>
</dbReference>
<dbReference type="Proteomes" id="UP000002283">
    <property type="component" value="Chromosome II"/>
</dbReference>
<dbReference type="GO" id="GO:0005737">
    <property type="term" value="C:cytoplasm"/>
    <property type="evidence" value="ECO:0007669"/>
    <property type="project" value="InterPro"/>
</dbReference>
<dbReference type="GO" id="GO:0005524">
    <property type="term" value="F:ATP binding"/>
    <property type="evidence" value="ECO:0007669"/>
    <property type="project" value="UniProtKB-UniRule"/>
</dbReference>
<dbReference type="GO" id="GO:0004359">
    <property type="term" value="F:glutaminase activity"/>
    <property type="evidence" value="ECO:0007669"/>
    <property type="project" value="InterPro"/>
</dbReference>
<dbReference type="GO" id="GO:0046872">
    <property type="term" value="F:metal ion binding"/>
    <property type="evidence" value="ECO:0007669"/>
    <property type="project" value="UniProtKB-KW"/>
</dbReference>
<dbReference type="GO" id="GO:0003952">
    <property type="term" value="F:NAD+ synthase (glutamine-hydrolyzing) activity"/>
    <property type="evidence" value="ECO:0007669"/>
    <property type="project" value="InterPro"/>
</dbReference>
<dbReference type="GO" id="GO:0008795">
    <property type="term" value="F:NAD+ synthase activity"/>
    <property type="evidence" value="ECO:0007669"/>
    <property type="project" value="UniProtKB-UniRule"/>
</dbReference>
<dbReference type="GO" id="GO:0009435">
    <property type="term" value="P:NAD biosynthetic process"/>
    <property type="evidence" value="ECO:0007669"/>
    <property type="project" value="UniProtKB-UniRule"/>
</dbReference>
<dbReference type="CDD" id="cd00553">
    <property type="entry name" value="NAD_synthase"/>
    <property type="match status" value="1"/>
</dbReference>
<dbReference type="Gene3D" id="3.40.50.620">
    <property type="entry name" value="HUPs"/>
    <property type="match status" value="1"/>
</dbReference>
<dbReference type="HAMAP" id="MF_00193">
    <property type="entry name" value="NadE_ammonia_dep"/>
    <property type="match status" value="1"/>
</dbReference>
<dbReference type="InterPro" id="IPR022310">
    <property type="entry name" value="NAD/GMP_synthase"/>
</dbReference>
<dbReference type="InterPro" id="IPR003694">
    <property type="entry name" value="NAD_synthase"/>
</dbReference>
<dbReference type="InterPro" id="IPR022926">
    <property type="entry name" value="NH(3)-dep_NAD(+)_synth"/>
</dbReference>
<dbReference type="InterPro" id="IPR014729">
    <property type="entry name" value="Rossmann-like_a/b/a_fold"/>
</dbReference>
<dbReference type="NCBIfam" id="TIGR00552">
    <property type="entry name" value="nadE"/>
    <property type="match status" value="1"/>
</dbReference>
<dbReference type="NCBIfam" id="NF001979">
    <property type="entry name" value="PRK00768.1"/>
    <property type="match status" value="1"/>
</dbReference>
<dbReference type="PANTHER" id="PTHR23090">
    <property type="entry name" value="NH 3 /GLUTAMINE-DEPENDENT NAD + SYNTHETASE"/>
    <property type="match status" value="1"/>
</dbReference>
<dbReference type="PANTHER" id="PTHR23090:SF7">
    <property type="entry name" value="NH(3)-DEPENDENT NAD(+) SYNTHETASE"/>
    <property type="match status" value="1"/>
</dbReference>
<dbReference type="Pfam" id="PF02540">
    <property type="entry name" value="NAD_synthase"/>
    <property type="match status" value="1"/>
</dbReference>
<dbReference type="SUPFAM" id="SSF52402">
    <property type="entry name" value="Adenine nucleotide alpha hydrolases-like"/>
    <property type="match status" value="1"/>
</dbReference>
<comment type="function">
    <text evidence="1">Catalyzes the ATP-dependent amidation of deamido-NAD to form NAD. Uses ammonia as a nitrogen source.</text>
</comment>
<comment type="catalytic activity">
    <reaction evidence="1">
        <text>deamido-NAD(+) + NH4(+) + ATP = AMP + diphosphate + NAD(+) + H(+)</text>
        <dbReference type="Rhea" id="RHEA:21188"/>
        <dbReference type="ChEBI" id="CHEBI:15378"/>
        <dbReference type="ChEBI" id="CHEBI:28938"/>
        <dbReference type="ChEBI" id="CHEBI:30616"/>
        <dbReference type="ChEBI" id="CHEBI:33019"/>
        <dbReference type="ChEBI" id="CHEBI:57540"/>
        <dbReference type="ChEBI" id="CHEBI:58437"/>
        <dbReference type="ChEBI" id="CHEBI:456215"/>
        <dbReference type="EC" id="6.3.1.5"/>
    </reaction>
</comment>
<comment type="pathway">
    <text evidence="1">Cofactor biosynthesis; NAD(+) biosynthesis; NAD(+) from deamido-NAD(+) (ammonia route): step 1/1.</text>
</comment>
<comment type="subunit">
    <text evidence="1">Homodimer.</text>
</comment>
<comment type="similarity">
    <text evidence="1">Belongs to the NAD synthetase family.</text>
</comment>